<name>VPS28_SCHPO</name>
<accession>O13872</accession>
<reference key="1">
    <citation type="journal article" date="2002" name="Nature">
        <title>The genome sequence of Schizosaccharomyces pombe.</title>
        <authorList>
            <person name="Wood V."/>
            <person name="Gwilliam R."/>
            <person name="Rajandream M.A."/>
            <person name="Lyne M.H."/>
            <person name="Lyne R."/>
            <person name="Stewart A."/>
            <person name="Sgouros J.G."/>
            <person name="Peat N."/>
            <person name="Hayles J."/>
            <person name="Baker S.G."/>
            <person name="Basham D."/>
            <person name="Bowman S."/>
            <person name="Brooks K."/>
            <person name="Brown D."/>
            <person name="Brown S."/>
            <person name="Chillingworth T."/>
            <person name="Churcher C.M."/>
            <person name="Collins M."/>
            <person name="Connor R."/>
            <person name="Cronin A."/>
            <person name="Davis P."/>
            <person name="Feltwell T."/>
            <person name="Fraser A."/>
            <person name="Gentles S."/>
            <person name="Goble A."/>
            <person name="Hamlin N."/>
            <person name="Harris D.E."/>
            <person name="Hidalgo J."/>
            <person name="Hodgson G."/>
            <person name="Holroyd S."/>
            <person name="Hornsby T."/>
            <person name="Howarth S."/>
            <person name="Huckle E.J."/>
            <person name="Hunt S."/>
            <person name="Jagels K."/>
            <person name="James K.D."/>
            <person name="Jones L."/>
            <person name="Jones M."/>
            <person name="Leather S."/>
            <person name="McDonald S."/>
            <person name="McLean J."/>
            <person name="Mooney P."/>
            <person name="Moule S."/>
            <person name="Mungall K.L."/>
            <person name="Murphy L.D."/>
            <person name="Niblett D."/>
            <person name="Odell C."/>
            <person name="Oliver K."/>
            <person name="O'Neil S."/>
            <person name="Pearson D."/>
            <person name="Quail M.A."/>
            <person name="Rabbinowitsch E."/>
            <person name="Rutherford K.M."/>
            <person name="Rutter S."/>
            <person name="Saunders D."/>
            <person name="Seeger K."/>
            <person name="Sharp S."/>
            <person name="Skelton J."/>
            <person name="Simmonds M.N."/>
            <person name="Squares R."/>
            <person name="Squares S."/>
            <person name="Stevens K."/>
            <person name="Taylor K."/>
            <person name="Taylor R.G."/>
            <person name="Tivey A."/>
            <person name="Walsh S.V."/>
            <person name="Warren T."/>
            <person name="Whitehead S."/>
            <person name="Woodward J.R."/>
            <person name="Volckaert G."/>
            <person name="Aert R."/>
            <person name="Robben J."/>
            <person name="Grymonprez B."/>
            <person name="Weltjens I."/>
            <person name="Vanstreels E."/>
            <person name="Rieger M."/>
            <person name="Schaefer M."/>
            <person name="Mueller-Auer S."/>
            <person name="Gabel C."/>
            <person name="Fuchs M."/>
            <person name="Duesterhoeft A."/>
            <person name="Fritzc C."/>
            <person name="Holzer E."/>
            <person name="Moestl D."/>
            <person name="Hilbert H."/>
            <person name="Borzym K."/>
            <person name="Langer I."/>
            <person name="Beck A."/>
            <person name="Lehrach H."/>
            <person name="Reinhardt R."/>
            <person name="Pohl T.M."/>
            <person name="Eger P."/>
            <person name="Zimmermann W."/>
            <person name="Wedler H."/>
            <person name="Wambutt R."/>
            <person name="Purnelle B."/>
            <person name="Goffeau A."/>
            <person name="Cadieu E."/>
            <person name="Dreano S."/>
            <person name="Gloux S."/>
            <person name="Lelaure V."/>
            <person name="Mottier S."/>
            <person name="Galibert F."/>
            <person name="Aves S.J."/>
            <person name="Xiang Z."/>
            <person name="Hunt C."/>
            <person name="Moore K."/>
            <person name="Hurst S.M."/>
            <person name="Lucas M."/>
            <person name="Rochet M."/>
            <person name="Gaillardin C."/>
            <person name="Tallada V.A."/>
            <person name="Garzon A."/>
            <person name="Thode G."/>
            <person name="Daga R.R."/>
            <person name="Cruzado L."/>
            <person name="Jimenez J."/>
            <person name="Sanchez M."/>
            <person name="del Rey F."/>
            <person name="Benito J."/>
            <person name="Dominguez A."/>
            <person name="Revuelta J.L."/>
            <person name="Moreno S."/>
            <person name="Armstrong J."/>
            <person name="Forsburg S.L."/>
            <person name="Cerutti L."/>
            <person name="Lowe T."/>
            <person name="McCombie W.R."/>
            <person name="Paulsen I."/>
            <person name="Potashkin J."/>
            <person name="Shpakovski G.V."/>
            <person name="Ussery D."/>
            <person name="Barrell B.G."/>
            <person name="Nurse P."/>
        </authorList>
    </citation>
    <scope>NUCLEOTIDE SEQUENCE [LARGE SCALE GENOMIC DNA]</scope>
    <source>
        <strain>972 / ATCC 24843</strain>
    </source>
</reference>
<comment type="function">
    <text evidence="1">Component of the ESCRT-I complex, a regulator of vesicular trafficking process.</text>
</comment>
<comment type="subunit">
    <text evidence="1">Component of the ESCRT-I complex (endosomal sorting complex required for transport I).</text>
</comment>
<comment type="subcellular location">
    <subcellularLocation>
        <location evidence="1">Endosome</location>
    </subcellularLocation>
    <subcellularLocation>
        <location evidence="1">Late endosome membrane</location>
        <topology evidence="1">Peripheral membrane protein</topology>
    </subcellularLocation>
</comment>
<comment type="similarity">
    <text evidence="2 3">Belongs to the VPS28 family.</text>
</comment>
<sequence length="248" mass="28191">MTEYYDLNLLEKETSEENNFHTKNQQVREDLSILYSILVALEQLEKAFTKDAVSTSDFNSTCELLIQQWESCFSDERVTQAFGSFEDFCSKYRLQCPRAIKRIQEGISDERSQSNSTFSNAISTTAEPSIAMNDTTPQTVNPTKAPSNPSASIAKSIAGLVQNFITTLDAIRLNFIAKDQLHPLLSELIVSMDDLTESLKIQVSCRNKLVQWLIKINNMNITDQLNDVEKRELLYDLEQAYAECYSLL</sequence>
<organism>
    <name type="scientific">Schizosaccharomyces pombe (strain 972 / ATCC 24843)</name>
    <name type="common">Fission yeast</name>
    <dbReference type="NCBI Taxonomy" id="284812"/>
    <lineage>
        <taxon>Eukaryota</taxon>
        <taxon>Fungi</taxon>
        <taxon>Dikarya</taxon>
        <taxon>Ascomycota</taxon>
        <taxon>Taphrinomycotina</taxon>
        <taxon>Schizosaccharomycetes</taxon>
        <taxon>Schizosaccharomycetales</taxon>
        <taxon>Schizosaccharomycetaceae</taxon>
        <taxon>Schizosaccharomyces</taxon>
    </lineage>
</organism>
<evidence type="ECO:0000250" key="1"/>
<evidence type="ECO:0000255" key="2">
    <source>
        <dbReference type="PROSITE-ProRule" id="PRU00642"/>
    </source>
</evidence>
<evidence type="ECO:0000255" key="3">
    <source>
        <dbReference type="PROSITE-ProRule" id="PRU00645"/>
    </source>
</evidence>
<evidence type="ECO:0000256" key="4">
    <source>
        <dbReference type="SAM" id="MobiDB-lite"/>
    </source>
</evidence>
<keyword id="KW-0967">Endosome</keyword>
<keyword id="KW-0472">Membrane</keyword>
<keyword id="KW-0653">Protein transport</keyword>
<keyword id="KW-1185">Reference proteome</keyword>
<keyword id="KW-0813">Transport</keyword>
<feature type="chain" id="PRO_0000120957" description="Vacuolar protein sorting-associated protein 28 homolog">
    <location>
        <begin position="1"/>
        <end position="248"/>
    </location>
</feature>
<feature type="domain" description="VPS28 N-terminal" evidence="3">
    <location>
        <begin position="3"/>
        <end position="113"/>
    </location>
</feature>
<feature type="domain" description="VPS28 C-terminal" evidence="2">
    <location>
        <begin position="152"/>
        <end position="248"/>
    </location>
</feature>
<feature type="region of interest" description="Disordered" evidence="4">
    <location>
        <begin position="128"/>
        <end position="148"/>
    </location>
</feature>
<protein>
    <recommendedName>
        <fullName>Vacuolar protein sorting-associated protein 28 homolog</fullName>
    </recommendedName>
    <alternativeName>
        <fullName>ESCRT-I complex subunit vps28</fullName>
    </alternativeName>
</protein>
<gene>
    <name type="primary">vps28</name>
    <name type="ORF">SPAC1B3.07c</name>
</gene>
<proteinExistence type="inferred from homology"/>
<dbReference type="EMBL" id="CU329670">
    <property type="protein sequence ID" value="CAB11236.1"/>
    <property type="molecule type" value="Genomic_DNA"/>
</dbReference>
<dbReference type="PIR" id="T38025">
    <property type="entry name" value="T38025"/>
</dbReference>
<dbReference type="RefSeq" id="NP_594791.1">
    <property type="nucleotide sequence ID" value="NM_001020219.2"/>
</dbReference>
<dbReference type="SMR" id="O13872"/>
<dbReference type="BioGRID" id="278891">
    <property type="interactions" value="6"/>
</dbReference>
<dbReference type="FunCoup" id="O13872">
    <property type="interactions" value="325"/>
</dbReference>
<dbReference type="STRING" id="284812.O13872"/>
<dbReference type="PaxDb" id="4896-SPAC1B3.07c.1"/>
<dbReference type="EnsemblFungi" id="SPAC1B3.07c.1">
    <property type="protein sequence ID" value="SPAC1B3.07c.1:pep"/>
    <property type="gene ID" value="SPAC1B3.07c"/>
</dbReference>
<dbReference type="GeneID" id="2542429"/>
<dbReference type="KEGG" id="spo:2542429"/>
<dbReference type="PomBase" id="SPAC1B3.07c">
    <property type="gene designation" value="vps28"/>
</dbReference>
<dbReference type="VEuPathDB" id="FungiDB:SPAC1B3.07c"/>
<dbReference type="eggNOG" id="KOG3284">
    <property type="taxonomic scope" value="Eukaryota"/>
</dbReference>
<dbReference type="HOGENOM" id="CLU_076417_1_0_1"/>
<dbReference type="InParanoid" id="O13872"/>
<dbReference type="OMA" id="CDEFPTV"/>
<dbReference type="PhylomeDB" id="O13872"/>
<dbReference type="PRO" id="PR:O13872"/>
<dbReference type="Proteomes" id="UP000002485">
    <property type="component" value="Chromosome I"/>
</dbReference>
<dbReference type="GO" id="GO:0000813">
    <property type="term" value="C:ESCRT I complex"/>
    <property type="evidence" value="ECO:0000318"/>
    <property type="project" value="GO_Central"/>
</dbReference>
<dbReference type="GO" id="GO:0031902">
    <property type="term" value="C:late endosome membrane"/>
    <property type="evidence" value="ECO:0007669"/>
    <property type="project" value="UniProtKB-SubCell"/>
</dbReference>
<dbReference type="GO" id="GO:0044877">
    <property type="term" value="F:protein-containing complex binding"/>
    <property type="evidence" value="ECO:0000318"/>
    <property type="project" value="GO_Central"/>
</dbReference>
<dbReference type="GO" id="GO:0045324">
    <property type="term" value="P:late endosome to vacuole transport"/>
    <property type="evidence" value="ECO:0000315"/>
    <property type="project" value="PomBase"/>
</dbReference>
<dbReference type="GO" id="GO:0043328">
    <property type="term" value="P:protein transport to vacuole involved in ubiquitin-dependent protein catabolic process via the multivesicular body sorting pathway"/>
    <property type="evidence" value="ECO:0000315"/>
    <property type="project" value="PomBase"/>
</dbReference>
<dbReference type="FunFam" id="1.20.120.1130:FF:000001">
    <property type="entry name" value="Vacuolar protein sorting-associated protein 28 homolog"/>
    <property type="match status" value="1"/>
</dbReference>
<dbReference type="Gene3D" id="1.20.120.1130">
    <property type="match status" value="1"/>
</dbReference>
<dbReference type="Gene3D" id="1.20.1440.200">
    <property type="match status" value="1"/>
</dbReference>
<dbReference type="InterPro" id="IPR037202">
    <property type="entry name" value="ESCRT_assembly_dom"/>
</dbReference>
<dbReference type="InterPro" id="IPR007143">
    <property type="entry name" value="Vps28"/>
</dbReference>
<dbReference type="InterPro" id="IPR017899">
    <property type="entry name" value="VPS28_C"/>
</dbReference>
<dbReference type="InterPro" id="IPR037206">
    <property type="entry name" value="VPS28_C_sf"/>
</dbReference>
<dbReference type="InterPro" id="IPR017898">
    <property type="entry name" value="VPS28_N"/>
</dbReference>
<dbReference type="InterPro" id="IPR038358">
    <property type="entry name" value="VPS28_N_sf"/>
</dbReference>
<dbReference type="PANTHER" id="PTHR12937">
    <property type="entry name" value="VACUOLAR PROTEIN SORTING 28, ISOFORM 2 VPS28"/>
    <property type="match status" value="1"/>
</dbReference>
<dbReference type="PANTHER" id="PTHR12937:SF0">
    <property type="entry name" value="VACUOLAR PROTEIN SORTING-ASSOCIATED PROTEIN 28 HOMOLOG"/>
    <property type="match status" value="1"/>
</dbReference>
<dbReference type="Pfam" id="PF03997">
    <property type="entry name" value="VPS28"/>
    <property type="match status" value="1"/>
</dbReference>
<dbReference type="PIRSF" id="PIRSF017535">
    <property type="entry name" value="VPS28"/>
    <property type="match status" value="1"/>
</dbReference>
<dbReference type="SUPFAM" id="SSF140111">
    <property type="entry name" value="Endosomal sorting complex assembly domain"/>
    <property type="match status" value="1"/>
</dbReference>
<dbReference type="SUPFAM" id="SSF140427">
    <property type="entry name" value="VPS28 C-terminal domain-like"/>
    <property type="match status" value="1"/>
</dbReference>
<dbReference type="PROSITE" id="PS51310">
    <property type="entry name" value="VPS28_C"/>
    <property type="match status" value="1"/>
</dbReference>
<dbReference type="PROSITE" id="PS51313">
    <property type="entry name" value="VPS28_N"/>
    <property type="match status" value="1"/>
</dbReference>